<name>YBQ3_SCHPO</name>
<dbReference type="EC" id="1.-.-.-"/>
<dbReference type="EMBL" id="CU329671">
    <property type="protein sequence ID" value="CAB46711.2"/>
    <property type="molecule type" value="Genomic_DNA"/>
</dbReference>
<dbReference type="PIR" id="T39296">
    <property type="entry name" value="T39296"/>
</dbReference>
<dbReference type="RefSeq" id="NP_595258.2">
    <property type="nucleotide sequence ID" value="NM_001021164.3"/>
</dbReference>
<dbReference type="SMR" id="O42896"/>
<dbReference type="BioGRID" id="276633">
    <property type="interactions" value="18"/>
</dbReference>
<dbReference type="FunCoup" id="O42896">
    <property type="interactions" value="28"/>
</dbReference>
<dbReference type="STRING" id="284812.O42896"/>
<dbReference type="PaxDb" id="4896-SPBC115.03.1"/>
<dbReference type="EnsemblFungi" id="SPBC115.03.1">
    <property type="protein sequence ID" value="SPBC115.03.1:pep"/>
    <property type="gene ID" value="SPBC115.03"/>
</dbReference>
<dbReference type="PomBase" id="SPBC115.03"/>
<dbReference type="VEuPathDB" id="FungiDB:SPBC115.03"/>
<dbReference type="eggNOG" id="KOG2742">
    <property type="taxonomic scope" value="Eukaryota"/>
</dbReference>
<dbReference type="HOGENOM" id="CLU_023194_19_1_1"/>
<dbReference type="InParanoid" id="O42896"/>
<dbReference type="OMA" id="RFERWRP"/>
<dbReference type="PhylomeDB" id="O42896"/>
<dbReference type="PRO" id="PR:O42896"/>
<dbReference type="Proteomes" id="UP000002485">
    <property type="component" value="Chromosome II"/>
</dbReference>
<dbReference type="GO" id="GO:0005829">
    <property type="term" value="C:cytosol"/>
    <property type="evidence" value="ECO:0007005"/>
    <property type="project" value="PomBase"/>
</dbReference>
<dbReference type="GO" id="GO:0005634">
    <property type="term" value="C:nucleus"/>
    <property type="evidence" value="ECO:0007005"/>
    <property type="project" value="PomBase"/>
</dbReference>
<dbReference type="GO" id="GO:0019210">
    <property type="term" value="F:kinase inhibitor activity"/>
    <property type="evidence" value="ECO:0000318"/>
    <property type="project" value="GO_Central"/>
</dbReference>
<dbReference type="GO" id="GO:0000166">
    <property type="term" value="F:nucleotide binding"/>
    <property type="evidence" value="ECO:0007669"/>
    <property type="project" value="InterPro"/>
</dbReference>
<dbReference type="GO" id="GO:0016491">
    <property type="term" value="F:oxidoreductase activity"/>
    <property type="evidence" value="ECO:0000266"/>
    <property type="project" value="PomBase"/>
</dbReference>
<dbReference type="GO" id="GO:0000122">
    <property type="term" value="P:negative regulation of transcription by RNA polymerase II"/>
    <property type="evidence" value="ECO:0000318"/>
    <property type="project" value="GO_Central"/>
</dbReference>
<dbReference type="Gene3D" id="3.30.360.10">
    <property type="entry name" value="Dihydrodipicolinate Reductase, domain 2"/>
    <property type="match status" value="1"/>
</dbReference>
<dbReference type="Gene3D" id="3.40.50.720">
    <property type="entry name" value="NAD(P)-binding Rossmann-like Domain"/>
    <property type="match status" value="1"/>
</dbReference>
<dbReference type="InterPro" id="IPR004104">
    <property type="entry name" value="Gfo/Idh/MocA-like_OxRdtase_C"/>
</dbReference>
<dbReference type="InterPro" id="IPR000683">
    <property type="entry name" value="Gfo/Idh/MocA-like_OxRdtase_N"/>
</dbReference>
<dbReference type="InterPro" id="IPR051317">
    <property type="entry name" value="Gfo/Idh/MocA_oxidoreduct"/>
</dbReference>
<dbReference type="InterPro" id="IPR036291">
    <property type="entry name" value="NAD(P)-bd_dom_sf"/>
</dbReference>
<dbReference type="PANTHER" id="PTHR43708">
    <property type="entry name" value="CONSERVED EXPRESSED OXIDOREDUCTASE (EUROFUNG)"/>
    <property type="match status" value="1"/>
</dbReference>
<dbReference type="PANTHER" id="PTHR43708:SF5">
    <property type="entry name" value="CONSERVED EXPRESSED OXIDOREDUCTASE (EUROFUNG)-RELATED"/>
    <property type="match status" value="1"/>
</dbReference>
<dbReference type="Pfam" id="PF01408">
    <property type="entry name" value="GFO_IDH_MocA"/>
    <property type="match status" value="1"/>
</dbReference>
<dbReference type="Pfam" id="PF02894">
    <property type="entry name" value="GFO_IDH_MocA_C"/>
    <property type="match status" value="1"/>
</dbReference>
<dbReference type="SUPFAM" id="SSF51735">
    <property type="entry name" value="NAD(P)-binding Rossmann-fold domains"/>
    <property type="match status" value="1"/>
</dbReference>
<gene>
    <name type="ORF">SPBC115.03</name>
    <name type="ORF">SPBC839.18c</name>
</gene>
<accession>O42896</accession>
<accession>Q9P7Z2</accession>
<evidence type="ECO:0000305" key="1"/>
<comment type="similarity">
    <text evidence="1">Belongs to the Gfo/Idh/MocA family.</text>
</comment>
<sequence length="368" mass="41271">MPPIKTAVLGTGVSAFVFHFPFLEALPSKFEIYACLERRATVTQSKARSAYPNILVYTNLDELLADVNIELVVVSLPPNVHSEIVKKALNAGKHVVCEKPFTPTYEEAKELYELAESKSLLLAIYQNRRWDGDFLTAKKIIESGRLGQVVEFESHFDRYRLGRKSGSWKDEPRPGNGMVYGIGSHLIDQAVSLFGTPYSVTAKLEAQRQIPPLEVEDYFRIILHYPAKGNKLPINVILSSTNVSCGCEMRFCIKGTRGSFMKFGFDPQESQLHSGMKPNDHGFGTDRFELYGNLWTVPLDADVKALPEPTKITVPTVQGNYRDFYDAVFEEILKKANEFPIKSDQVLAVEKIMEAAYKSSESSSSIQL</sequence>
<keyword id="KW-0560">Oxidoreductase</keyword>
<keyword id="KW-1185">Reference proteome</keyword>
<protein>
    <recommendedName>
        <fullName>Uncharacterized oxidoreductase C115.03</fullName>
        <ecNumber>1.-.-.-</ecNumber>
    </recommendedName>
</protein>
<reference key="1">
    <citation type="journal article" date="2002" name="Nature">
        <title>The genome sequence of Schizosaccharomyces pombe.</title>
        <authorList>
            <person name="Wood V."/>
            <person name="Gwilliam R."/>
            <person name="Rajandream M.A."/>
            <person name="Lyne M.H."/>
            <person name="Lyne R."/>
            <person name="Stewart A."/>
            <person name="Sgouros J.G."/>
            <person name="Peat N."/>
            <person name="Hayles J."/>
            <person name="Baker S.G."/>
            <person name="Basham D."/>
            <person name="Bowman S."/>
            <person name="Brooks K."/>
            <person name="Brown D."/>
            <person name="Brown S."/>
            <person name="Chillingworth T."/>
            <person name="Churcher C.M."/>
            <person name="Collins M."/>
            <person name="Connor R."/>
            <person name="Cronin A."/>
            <person name="Davis P."/>
            <person name="Feltwell T."/>
            <person name="Fraser A."/>
            <person name="Gentles S."/>
            <person name="Goble A."/>
            <person name="Hamlin N."/>
            <person name="Harris D.E."/>
            <person name="Hidalgo J."/>
            <person name="Hodgson G."/>
            <person name="Holroyd S."/>
            <person name="Hornsby T."/>
            <person name="Howarth S."/>
            <person name="Huckle E.J."/>
            <person name="Hunt S."/>
            <person name="Jagels K."/>
            <person name="James K.D."/>
            <person name="Jones L."/>
            <person name="Jones M."/>
            <person name="Leather S."/>
            <person name="McDonald S."/>
            <person name="McLean J."/>
            <person name="Mooney P."/>
            <person name="Moule S."/>
            <person name="Mungall K.L."/>
            <person name="Murphy L.D."/>
            <person name="Niblett D."/>
            <person name="Odell C."/>
            <person name="Oliver K."/>
            <person name="O'Neil S."/>
            <person name="Pearson D."/>
            <person name="Quail M.A."/>
            <person name="Rabbinowitsch E."/>
            <person name="Rutherford K.M."/>
            <person name="Rutter S."/>
            <person name="Saunders D."/>
            <person name="Seeger K."/>
            <person name="Sharp S."/>
            <person name="Skelton J."/>
            <person name="Simmonds M.N."/>
            <person name="Squares R."/>
            <person name="Squares S."/>
            <person name="Stevens K."/>
            <person name="Taylor K."/>
            <person name="Taylor R.G."/>
            <person name="Tivey A."/>
            <person name="Walsh S.V."/>
            <person name="Warren T."/>
            <person name="Whitehead S."/>
            <person name="Woodward J.R."/>
            <person name="Volckaert G."/>
            <person name="Aert R."/>
            <person name="Robben J."/>
            <person name="Grymonprez B."/>
            <person name="Weltjens I."/>
            <person name="Vanstreels E."/>
            <person name="Rieger M."/>
            <person name="Schaefer M."/>
            <person name="Mueller-Auer S."/>
            <person name="Gabel C."/>
            <person name="Fuchs M."/>
            <person name="Duesterhoeft A."/>
            <person name="Fritzc C."/>
            <person name="Holzer E."/>
            <person name="Moestl D."/>
            <person name="Hilbert H."/>
            <person name="Borzym K."/>
            <person name="Langer I."/>
            <person name="Beck A."/>
            <person name="Lehrach H."/>
            <person name="Reinhardt R."/>
            <person name="Pohl T.M."/>
            <person name="Eger P."/>
            <person name="Zimmermann W."/>
            <person name="Wedler H."/>
            <person name="Wambutt R."/>
            <person name="Purnelle B."/>
            <person name="Goffeau A."/>
            <person name="Cadieu E."/>
            <person name="Dreano S."/>
            <person name="Gloux S."/>
            <person name="Lelaure V."/>
            <person name="Mottier S."/>
            <person name="Galibert F."/>
            <person name="Aves S.J."/>
            <person name="Xiang Z."/>
            <person name="Hunt C."/>
            <person name="Moore K."/>
            <person name="Hurst S.M."/>
            <person name="Lucas M."/>
            <person name="Rochet M."/>
            <person name="Gaillardin C."/>
            <person name="Tallada V.A."/>
            <person name="Garzon A."/>
            <person name="Thode G."/>
            <person name="Daga R.R."/>
            <person name="Cruzado L."/>
            <person name="Jimenez J."/>
            <person name="Sanchez M."/>
            <person name="del Rey F."/>
            <person name="Benito J."/>
            <person name="Dominguez A."/>
            <person name="Revuelta J.L."/>
            <person name="Moreno S."/>
            <person name="Armstrong J."/>
            <person name="Forsburg S.L."/>
            <person name="Cerutti L."/>
            <person name="Lowe T."/>
            <person name="McCombie W.R."/>
            <person name="Paulsen I."/>
            <person name="Potashkin J."/>
            <person name="Shpakovski G.V."/>
            <person name="Ussery D."/>
            <person name="Barrell B.G."/>
            <person name="Nurse P."/>
        </authorList>
    </citation>
    <scope>NUCLEOTIDE SEQUENCE [LARGE SCALE GENOMIC DNA]</scope>
    <source>
        <strain>972 / ATCC 24843</strain>
    </source>
</reference>
<proteinExistence type="inferred from homology"/>
<organism>
    <name type="scientific">Schizosaccharomyces pombe (strain 972 / ATCC 24843)</name>
    <name type="common">Fission yeast</name>
    <dbReference type="NCBI Taxonomy" id="284812"/>
    <lineage>
        <taxon>Eukaryota</taxon>
        <taxon>Fungi</taxon>
        <taxon>Dikarya</taxon>
        <taxon>Ascomycota</taxon>
        <taxon>Taphrinomycotina</taxon>
        <taxon>Schizosaccharomycetes</taxon>
        <taxon>Schizosaccharomycetales</taxon>
        <taxon>Schizosaccharomycetaceae</taxon>
        <taxon>Schizosaccharomyces</taxon>
    </lineage>
</organism>
<feature type="chain" id="PRO_0000091789" description="Uncharacterized oxidoreductase C115.03">
    <location>
        <begin position="1"/>
        <end position="368"/>
    </location>
</feature>